<gene>
    <name evidence="1" type="primary">fapR</name>
    <name type="ordered locus">BAMEG_0639</name>
</gene>
<accession>C3L773</accession>
<evidence type="ECO:0000255" key="1">
    <source>
        <dbReference type="HAMAP-Rule" id="MF_01814"/>
    </source>
</evidence>
<name>FAPR_BACAC</name>
<protein>
    <recommendedName>
        <fullName evidence="1">Transcription factor FapR</fullName>
    </recommendedName>
    <alternativeName>
        <fullName evidence="1">Fatty acid and phospholipid biosynthesis regulator</fullName>
    </alternativeName>
</protein>
<reference key="1">
    <citation type="submission" date="2008-10" db="EMBL/GenBank/DDBJ databases">
        <title>Genome sequence of Bacillus anthracis str. CDC 684.</title>
        <authorList>
            <person name="Dodson R.J."/>
            <person name="Munk A.C."/>
            <person name="Brettin T."/>
            <person name="Bruce D."/>
            <person name="Detter C."/>
            <person name="Tapia R."/>
            <person name="Han C."/>
            <person name="Sutton G."/>
            <person name="Sims D."/>
        </authorList>
    </citation>
    <scope>NUCLEOTIDE SEQUENCE [LARGE SCALE GENOMIC DNA]</scope>
    <source>
        <strain>CDC 684 / NRRL 3495</strain>
    </source>
</reference>
<keyword id="KW-0238">DNA-binding</keyword>
<keyword id="KW-0275">Fatty acid biosynthesis</keyword>
<keyword id="KW-0276">Fatty acid metabolism</keyword>
<keyword id="KW-0444">Lipid biosynthesis</keyword>
<keyword id="KW-0443">Lipid metabolism</keyword>
<keyword id="KW-0678">Repressor</keyword>
<keyword id="KW-0804">Transcription</keyword>
<keyword id="KW-0805">Transcription regulation</keyword>
<comment type="function">
    <text evidence="1">Transcriptional factor involved in regulation of membrane lipid biosynthesis by repressing genes involved in fatty acid and phospholipid metabolism.</text>
</comment>
<comment type="similarity">
    <text evidence="1">Belongs to the FapR family.</text>
</comment>
<proteinExistence type="inferred from homology"/>
<sequence>MKKRRSKKERQELLQQTIETNPFITDEDLAEKFQVSIQTVRLDRMELSIPELRERIKHVATKQHEEDVKSLPLEEVVGEIIDIELDRHAISIFEVKVEHVFKRNQIARGHHLFAQANSLAVAVIDEELALTAKSTIRYIRPVKLGERVVAKARVEDVENDKGRTVVKVRSFVGEELVFTGTFEMYRSSNYSEEGNNL</sequence>
<dbReference type="EMBL" id="CP001215">
    <property type="protein sequence ID" value="ACP12149.1"/>
    <property type="molecule type" value="Genomic_DNA"/>
</dbReference>
<dbReference type="RefSeq" id="WP_000747352.1">
    <property type="nucleotide sequence ID" value="NC_012581.1"/>
</dbReference>
<dbReference type="SMR" id="C3L773"/>
<dbReference type="GeneID" id="93007258"/>
<dbReference type="KEGG" id="bah:BAMEG_0639"/>
<dbReference type="HOGENOM" id="CLU_095708_0_0_9"/>
<dbReference type="GO" id="GO:0003677">
    <property type="term" value="F:DNA binding"/>
    <property type="evidence" value="ECO:0007669"/>
    <property type="project" value="UniProtKB-KW"/>
</dbReference>
<dbReference type="GO" id="GO:0003700">
    <property type="term" value="F:DNA-binding transcription factor activity"/>
    <property type="evidence" value="ECO:0007669"/>
    <property type="project" value="UniProtKB-UniRule"/>
</dbReference>
<dbReference type="GO" id="GO:0006633">
    <property type="term" value="P:fatty acid biosynthetic process"/>
    <property type="evidence" value="ECO:0007669"/>
    <property type="project" value="UniProtKB-KW"/>
</dbReference>
<dbReference type="GO" id="GO:0045892">
    <property type="term" value="P:negative regulation of DNA-templated transcription"/>
    <property type="evidence" value="ECO:0007669"/>
    <property type="project" value="UniProtKB-UniRule"/>
</dbReference>
<dbReference type="GO" id="GO:0045717">
    <property type="term" value="P:negative regulation of fatty acid biosynthetic process"/>
    <property type="evidence" value="ECO:0007669"/>
    <property type="project" value="UniProtKB-UniRule"/>
</dbReference>
<dbReference type="CDD" id="cd03440">
    <property type="entry name" value="hot_dog"/>
    <property type="match status" value="1"/>
</dbReference>
<dbReference type="Gene3D" id="3.10.129.10">
    <property type="entry name" value="Hotdog Thioesterase"/>
    <property type="match status" value="1"/>
</dbReference>
<dbReference type="Gene3D" id="1.10.10.10">
    <property type="entry name" value="Winged helix-like DNA-binding domain superfamily/Winged helix DNA-binding domain"/>
    <property type="match status" value="1"/>
</dbReference>
<dbReference type="HAMAP" id="MF_01814">
    <property type="entry name" value="Transcrip_fact_FapR"/>
    <property type="match status" value="1"/>
</dbReference>
<dbReference type="InterPro" id="IPR029069">
    <property type="entry name" value="HotDog_dom_sf"/>
</dbReference>
<dbReference type="InterPro" id="IPR006683">
    <property type="entry name" value="Thioestr_dom"/>
</dbReference>
<dbReference type="InterPro" id="IPR017275">
    <property type="entry name" value="Transcription_factor_FapR"/>
</dbReference>
<dbReference type="InterPro" id="IPR036388">
    <property type="entry name" value="WH-like_DNA-bd_sf"/>
</dbReference>
<dbReference type="InterPro" id="IPR036390">
    <property type="entry name" value="WH_DNA-bd_sf"/>
</dbReference>
<dbReference type="NCBIfam" id="NF003359">
    <property type="entry name" value="PRK04424.1"/>
    <property type="match status" value="1"/>
</dbReference>
<dbReference type="Pfam" id="PF03061">
    <property type="entry name" value="4HBT"/>
    <property type="match status" value="1"/>
</dbReference>
<dbReference type="PIRSF" id="PIRSF037733">
    <property type="entry name" value="Transcription_factor_FapR"/>
    <property type="match status" value="1"/>
</dbReference>
<dbReference type="SUPFAM" id="SSF54637">
    <property type="entry name" value="Thioesterase/thiol ester dehydrase-isomerase"/>
    <property type="match status" value="1"/>
</dbReference>
<dbReference type="SUPFAM" id="SSF46785">
    <property type="entry name" value="Winged helix' DNA-binding domain"/>
    <property type="match status" value="1"/>
</dbReference>
<feature type="chain" id="PRO_1000187828" description="Transcription factor FapR">
    <location>
        <begin position="1"/>
        <end position="197"/>
    </location>
</feature>
<organism>
    <name type="scientific">Bacillus anthracis (strain CDC 684 / NRRL 3495)</name>
    <dbReference type="NCBI Taxonomy" id="568206"/>
    <lineage>
        <taxon>Bacteria</taxon>
        <taxon>Bacillati</taxon>
        <taxon>Bacillota</taxon>
        <taxon>Bacilli</taxon>
        <taxon>Bacillales</taxon>
        <taxon>Bacillaceae</taxon>
        <taxon>Bacillus</taxon>
        <taxon>Bacillus cereus group</taxon>
    </lineage>
</organism>